<feature type="chain" id="PRO_0000101983" description="General transcription and DNA repair factor IIH helicase subunit XPD/RAD3">
    <location>
        <begin position="1"/>
        <end position="778"/>
    </location>
</feature>
<feature type="domain" description="Helicase ATP-binding" evidence="2">
    <location>
        <begin position="7"/>
        <end position="285"/>
    </location>
</feature>
<feature type="region of interest" description="Disordered" evidence="3">
    <location>
        <begin position="750"/>
        <end position="778"/>
    </location>
</feature>
<feature type="short sequence motif" description="DEAH box">
    <location>
        <begin position="235"/>
        <end position="238"/>
    </location>
</feature>
<feature type="compositionally biased region" description="Basic and acidic residues" evidence="3">
    <location>
        <begin position="750"/>
        <end position="765"/>
    </location>
</feature>
<feature type="compositionally biased region" description="Acidic residues" evidence="3">
    <location>
        <begin position="766"/>
        <end position="778"/>
    </location>
</feature>
<feature type="binding site" evidence="2">
    <location>
        <begin position="42"/>
        <end position="49"/>
    </location>
    <ligand>
        <name>ATP</name>
        <dbReference type="ChEBI" id="CHEBI:30616"/>
    </ligand>
</feature>
<feature type="binding site" evidence="1">
    <location>
        <position position="115"/>
    </location>
    <ligand>
        <name>[4Fe-4S] cluster</name>
        <dbReference type="ChEBI" id="CHEBI:49883"/>
    </ligand>
</feature>
<feature type="binding site" evidence="1">
    <location>
        <position position="133"/>
    </location>
    <ligand>
        <name>[4Fe-4S] cluster</name>
        <dbReference type="ChEBI" id="CHEBI:49883"/>
    </ligand>
</feature>
<feature type="binding site" evidence="1">
    <location>
        <position position="156"/>
    </location>
    <ligand>
        <name>[4Fe-4S] cluster</name>
        <dbReference type="ChEBI" id="CHEBI:49883"/>
    </ligand>
</feature>
<feature type="binding site" evidence="1">
    <location>
        <position position="191"/>
    </location>
    <ligand>
        <name>[4Fe-4S] cluster</name>
        <dbReference type="ChEBI" id="CHEBI:49883"/>
    </ligand>
</feature>
<feature type="mutagenesis site" description="Loss of ATPase and DNA helicase activities but not ssDNA-binding or ATP-binding, impaired removal of pyrimidine dimers. Loss of RNA:DNA helicase. Extremely UV-sensitive." evidence="6 7 11">
    <original>K</original>
    <variation>R</variation>
    <variation>A</variation>
    <location>
        <position position="48"/>
    </location>
</feature>
<feature type="mutagenesis site" description="Intermediate level of UV-sensitivity." evidence="6">
    <original>R</original>
    <variation>H</variation>
    <location>
        <position position="111"/>
    </location>
</feature>
<feature type="mutagenesis site" description="Extremely UV-sensitive." evidence="6">
    <original>C</original>
    <variation>S</variation>
    <location>
        <position position="115"/>
    </location>
</feature>
<feature type="mutagenesis site" description="In rad3-1; abnormal sensitivity to UV irradiation, defective excision of damaged DNA bases." evidence="14">
    <original>E</original>
    <variation>K</variation>
    <location>
        <position position="236"/>
    </location>
</feature>
<feature type="mutagenesis site" description="Loss of 5'-3' helicase activity of TFIIH, transcription still occurs, has no effect on DNA translocase activity." evidence="9">
    <original>E</original>
    <variation>Q</variation>
    <location>
        <position position="236"/>
    </location>
</feature>
<feature type="mutagenesis site" description="In rad3-2; abnormal sensitivity to UV irradiation, defective excision of damaged DNA bases." evidence="14">
    <original>G</original>
    <variation>R</variation>
    <location>
        <position position="461"/>
    </location>
</feature>
<feature type="sequence conflict" description="In Ref. 5; AA sequence." evidence="20" ref="5">
    <original>K</original>
    <variation>G</variation>
    <location>
        <position position="2"/>
    </location>
</feature>
<feature type="strand" evidence="27">
    <location>
        <begin position="2"/>
        <end position="4"/>
    </location>
</feature>
<feature type="strand" evidence="27">
    <location>
        <begin position="9"/>
        <end position="11"/>
    </location>
</feature>
<feature type="strand" evidence="27">
    <location>
        <begin position="13"/>
        <end position="15"/>
    </location>
</feature>
<feature type="helix" evidence="27">
    <location>
        <begin position="19"/>
        <end position="34"/>
    </location>
</feature>
<feature type="strand" evidence="27">
    <location>
        <begin position="36"/>
        <end position="41"/>
    </location>
</feature>
<feature type="strand" evidence="26">
    <location>
        <begin position="44"/>
        <end position="46"/>
    </location>
</feature>
<feature type="helix" evidence="27">
    <location>
        <begin position="49"/>
        <end position="62"/>
    </location>
</feature>
<feature type="strand" evidence="25">
    <location>
        <begin position="63"/>
        <end position="65"/>
    </location>
</feature>
<feature type="strand" evidence="27">
    <location>
        <begin position="69"/>
        <end position="75"/>
    </location>
</feature>
<feature type="helix" evidence="27">
    <location>
        <begin position="76"/>
        <end position="96"/>
    </location>
</feature>
<feature type="strand" evidence="27">
    <location>
        <begin position="97"/>
        <end position="99"/>
    </location>
</feature>
<feature type="strand" evidence="27">
    <location>
        <begin position="104"/>
        <end position="107"/>
    </location>
</feature>
<feature type="helix" evidence="27">
    <location>
        <begin position="111"/>
        <end position="113"/>
    </location>
</feature>
<feature type="turn" evidence="27">
    <location>
        <begin position="118"/>
        <end position="120"/>
    </location>
</feature>
<feature type="helix" evidence="27">
    <location>
        <begin position="126"/>
        <end position="137"/>
    </location>
</feature>
<feature type="helix" evidence="27">
    <location>
        <begin position="140"/>
        <end position="147"/>
    </location>
</feature>
<feature type="strand" evidence="26">
    <location>
        <begin position="151"/>
        <end position="153"/>
    </location>
</feature>
<feature type="helix" evidence="27">
    <location>
        <begin position="157"/>
        <end position="162"/>
    </location>
</feature>
<feature type="helix" evidence="27">
    <location>
        <begin position="167"/>
        <end position="169"/>
    </location>
</feature>
<feature type="strand" evidence="27">
    <location>
        <begin position="173"/>
        <end position="176"/>
    </location>
</feature>
<feature type="helix" evidence="27">
    <location>
        <begin position="178"/>
        <end position="188"/>
    </location>
</feature>
<feature type="helix" evidence="27">
    <location>
        <begin position="192"/>
        <end position="197"/>
    </location>
</feature>
<feature type="helix" evidence="27">
    <location>
        <begin position="200"/>
        <end position="202"/>
    </location>
</feature>
<feature type="strand" evidence="27">
    <location>
        <begin position="204"/>
        <end position="209"/>
    </location>
</feature>
<feature type="helix" evidence="27">
    <location>
        <begin position="211"/>
        <end position="214"/>
    </location>
</feature>
<feature type="helix" evidence="27">
    <location>
        <begin position="216"/>
        <end position="223"/>
    </location>
</feature>
<feature type="helix" evidence="25">
    <location>
        <begin position="224"/>
        <end position="227"/>
    </location>
</feature>
<feature type="strand" evidence="27">
    <location>
        <begin position="231"/>
        <end position="235"/>
    </location>
</feature>
<feature type="helix" evidence="25">
    <location>
        <begin position="237"/>
        <end position="239"/>
    </location>
</feature>
<feature type="helix" evidence="27">
    <location>
        <begin position="240"/>
        <end position="246"/>
    </location>
</feature>
<feature type="strand" evidence="27">
    <location>
        <begin position="250"/>
        <end position="253"/>
    </location>
</feature>
<feature type="helix" evidence="27">
    <location>
        <begin position="254"/>
        <end position="277"/>
    </location>
</feature>
<feature type="helix" evidence="27">
    <location>
        <begin position="280"/>
        <end position="291"/>
    </location>
</feature>
<feature type="helix" evidence="27">
    <location>
        <begin position="295"/>
        <end position="298"/>
    </location>
</feature>
<feature type="strand" evidence="29">
    <location>
        <begin position="301"/>
        <end position="303"/>
    </location>
</feature>
<feature type="helix" evidence="27">
    <location>
        <begin position="313"/>
        <end position="315"/>
    </location>
</feature>
<feature type="helix" evidence="25">
    <location>
        <begin position="323"/>
        <end position="326"/>
    </location>
</feature>
<feature type="helix" evidence="27">
    <location>
        <begin position="328"/>
        <end position="344"/>
    </location>
</feature>
<feature type="helix" evidence="28">
    <location>
        <begin position="345"/>
        <end position="347"/>
    </location>
</feature>
<feature type="strand" evidence="27">
    <location>
        <begin position="352"/>
        <end position="354"/>
    </location>
</feature>
<feature type="helix" evidence="27">
    <location>
        <begin position="356"/>
        <end position="366"/>
    </location>
</feature>
<feature type="helix" evidence="27">
    <location>
        <begin position="371"/>
        <end position="375"/>
    </location>
</feature>
<feature type="helix" evidence="27">
    <location>
        <begin position="377"/>
        <end position="387"/>
    </location>
</feature>
<feature type="turn" evidence="27">
    <location>
        <begin position="394"/>
        <end position="396"/>
    </location>
</feature>
<feature type="helix" evidence="27">
    <location>
        <begin position="397"/>
        <end position="409"/>
    </location>
</feature>
<feature type="strand" evidence="27">
    <location>
        <begin position="414"/>
        <end position="422"/>
    </location>
</feature>
<feature type="strand" evidence="27">
    <location>
        <begin position="424"/>
        <end position="427"/>
    </location>
</feature>
<feature type="strand" evidence="25">
    <location>
        <begin position="429"/>
        <end position="431"/>
    </location>
</feature>
<feature type="strand" evidence="27">
    <location>
        <begin position="434"/>
        <end position="439"/>
    </location>
</feature>
<feature type="turn" evidence="27">
    <location>
        <begin position="444"/>
        <end position="446"/>
    </location>
</feature>
<feature type="helix" evidence="27">
    <location>
        <begin position="447"/>
        <end position="452"/>
    </location>
</feature>
<feature type="strand" evidence="27">
    <location>
        <begin position="456"/>
        <end position="462"/>
    </location>
</feature>
<feature type="strand" evidence="26">
    <location>
        <begin position="465"/>
        <end position="467"/>
    </location>
</feature>
<feature type="helix" evidence="27">
    <location>
        <begin position="468"/>
        <end position="472"/>
    </location>
</feature>
<feature type="strand" evidence="27">
    <location>
        <begin position="477"/>
        <end position="482"/>
    </location>
</feature>
<feature type="strand" evidence="27">
    <location>
        <begin position="492"/>
        <end position="499"/>
    </location>
</feature>
<feature type="helix" evidence="27">
    <location>
        <begin position="510"/>
        <end position="512"/>
    </location>
</feature>
<feature type="helix" evidence="27">
    <location>
        <begin position="516"/>
        <end position="532"/>
    </location>
</feature>
<feature type="strand" evidence="27">
    <location>
        <begin position="534"/>
        <end position="542"/>
    </location>
</feature>
<feature type="helix" evidence="27">
    <location>
        <begin position="544"/>
        <end position="557"/>
    </location>
</feature>
<feature type="helix" evidence="27">
    <location>
        <begin position="559"/>
        <end position="566"/>
    </location>
</feature>
<feature type="strand" evidence="27">
    <location>
        <begin position="567"/>
        <end position="571"/>
    </location>
</feature>
<feature type="helix" evidence="27">
    <location>
        <begin position="576"/>
        <end position="591"/>
    </location>
</feature>
<feature type="strand" evidence="25">
    <location>
        <begin position="592"/>
        <end position="594"/>
    </location>
</feature>
<feature type="strand" evidence="27">
    <location>
        <begin position="596"/>
        <end position="601"/>
    </location>
</feature>
<feature type="helix" evidence="27">
    <location>
        <begin position="606"/>
        <end position="608"/>
    </location>
</feature>
<feature type="turn" evidence="27">
    <location>
        <begin position="614"/>
        <end position="616"/>
    </location>
</feature>
<feature type="strand" evidence="27">
    <location>
        <begin position="618"/>
        <end position="624"/>
    </location>
</feature>
<feature type="helix" evidence="27">
    <location>
        <begin position="633"/>
        <end position="645"/>
    </location>
</feature>
<feature type="helix" evidence="27">
    <location>
        <begin position="650"/>
        <end position="666"/>
    </location>
</feature>
<feature type="helix" evidence="27">
    <location>
        <begin position="667"/>
        <end position="669"/>
    </location>
</feature>
<feature type="strand" evidence="26">
    <location>
        <begin position="672"/>
        <end position="674"/>
    </location>
</feature>
<feature type="strand" evidence="27">
    <location>
        <begin position="677"/>
        <end position="682"/>
    </location>
</feature>
<feature type="helix" evidence="27">
    <location>
        <begin position="684"/>
        <end position="688"/>
    </location>
</feature>
<feature type="helix" evidence="27">
    <location>
        <begin position="690"/>
        <end position="692"/>
    </location>
</feature>
<feature type="helix" evidence="27">
    <location>
        <begin position="695"/>
        <end position="698"/>
    </location>
</feature>
<feature type="helix" evidence="27">
    <location>
        <begin position="703"/>
        <end position="705"/>
    </location>
</feature>
<feature type="strand" evidence="27">
    <location>
        <begin position="706"/>
        <end position="709"/>
    </location>
</feature>
<feature type="helix" evidence="27">
    <location>
        <begin position="710"/>
        <end position="723"/>
    </location>
</feature>
<feature type="helix" evidence="27">
    <location>
        <begin position="730"/>
        <end position="733"/>
    </location>
</feature>
<feature type="turn" evidence="27">
    <location>
        <begin position="734"/>
        <end position="737"/>
    </location>
</feature>
<feature type="helix" evidence="27">
    <location>
        <begin position="741"/>
        <end position="751"/>
    </location>
</feature>
<dbReference type="EC" id="5.6.2.3" evidence="9 10"/>
<dbReference type="EMBL" id="X02368">
    <property type="protein sequence ID" value="CAA26215.1"/>
    <property type="molecule type" value="Genomic_DNA"/>
</dbReference>
<dbReference type="EMBL" id="K03293">
    <property type="protein sequence ID" value="AAA34943.1"/>
    <property type="molecule type" value="Genomic_DNA"/>
</dbReference>
<dbReference type="EMBL" id="U18922">
    <property type="protein sequence ID" value="AAB64698.1"/>
    <property type="molecule type" value="Genomic_DNA"/>
</dbReference>
<dbReference type="EMBL" id="BK006939">
    <property type="protein sequence ID" value="DAA07833.1"/>
    <property type="molecule type" value="Genomic_DNA"/>
</dbReference>
<dbReference type="PIR" id="A23308">
    <property type="entry name" value="A23308"/>
</dbReference>
<dbReference type="RefSeq" id="NP_011098.3">
    <property type="nucleotide sequence ID" value="NM_001179061.3"/>
</dbReference>
<dbReference type="PDB" id="5FMF">
    <property type="method" value="EM"/>
    <property type="resolution" value="6.00 A"/>
    <property type="chains" value="Y=1-778"/>
</dbReference>
<dbReference type="PDB" id="5OQJ">
    <property type="method" value="EM"/>
    <property type="resolution" value="4.70 A"/>
    <property type="chains" value="0=1-778"/>
</dbReference>
<dbReference type="PDB" id="5OQM">
    <property type="method" value="EM"/>
    <property type="resolution" value="5.80 A"/>
    <property type="chains" value="0=1-778"/>
</dbReference>
<dbReference type="PDB" id="5SVA">
    <property type="method" value="EM"/>
    <property type="resolution" value="15.30 A"/>
    <property type="chains" value="Y=1-778"/>
</dbReference>
<dbReference type="PDB" id="6GYM">
    <property type="method" value="EM"/>
    <property type="resolution" value="6.70 A"/>
    <property type="chains" value="0=1-778"/>
</dbReference>
<dbReference type="PDB" id="7K01">
    <property type="method" value="EM"/>
    <property type="resolution" value="3.90 A"/>
    <property type="chains" value="0=1-778"/>
</dbReference>
<dbReference type="PDB" id="7K04">
    <property type="method" value="EM"/>
    <property type="resolution" value="9.25 A"/>
    <property type="chains" value="0=1-778"/>
</dbReference>
<dbReference type="PDB" id="7M2U">
    <property type="method" value="EM"/>
    <property type="resolution" value="8.20 A"/>
    <property type="chains" value="0=1-778"/>
</dbReference>
<dbReference type="PDB" id="7ML0">
    <property type="method" value="EM"/>
    <property type="resolution" value="3.00 A"/>
    <property type="chains" value="0=1-778"/>
</dbReference>
<dbReference type="PDB" id="7ML1">
    <property type="method" value="EM"/>
    <property type="resolution" value="4.00 A"/>
    <property type="chains" value="0=1-778"/>
</dbReference>
<dbReference type="PDB" id="7ML2">
    <property type="method" value="EM"/>
    <property type="resolution" value="3.40 A"/>
    <property type="chains" value="0=1-778"/>
</dbReference>
<dbReference type="PDB" id="7ML3">
    <property type="method" value="EM"/>
    <property type="resolution" value="7.60 A"/>
    <property type="chains" value="0=1-778"/>
</dbReference>
<dbReference type="PDB" id="7ML4">
    <property type="method" value="EM"/>
    <property type="resolution" value="3.10 A"/>
    <property type="chains" value="0=1-778"/>
</dbReference>
<dbReference type="PDB" id="7O4I">
    <property type="method" value="EM"/>
    <property type="resolution" value="3.20 A"/>
    <property type="chains" value="0=1-778"/>
</dbReference>
<dbReference type="PDB" id="7O4J">
    <property type="method" value="EM"/>
    <property type="resolution" value="2.90 A"/>
    <property type="chains" value="0=1-778"/>
</dbReference>
<dbReference type="PDB" id="7O4K">
    <property type="method" value="EM"/>
    <property type="resolution" value="3.60 A"/>
    <property type="chains" value="0=1-778"/>
</dbReference>
<dbReference type="PDB" id="7O4L">
    <property type="method" value="EM"/>
    <property type="resolution" value="3.40 A"/>
    <property type="chains" value="0=1-778"/>
</dbReference>
<dbReference type="PDB" id="7O72">
    <property type="method" value="EM"/>
    <property type="resolution" value="3.40 A"/>
    <property type="chains" value="0=1-778"/>
</dbReference>
<dbReference type="PDB" id="7O73">
    <property type="method" value="EM"/>
    <property type="resolution" value="3.40 A"/>
    <property type="chains" value="0=1-778"/>
</dbReference>
<dbReference type="PDB" id="7O75">
    <property type="method" value="EM"/>
    <property type="resolution" value="3.20 A"/>
    <property type="chains" value="0=1-778"/>
</dbReference>
<dbReference type="PDB" id="7ZS9">
    <property type="method" value="EM"/>
    <property type="resolution" value="3.10 A"/>
    <property type="chains" value="0=1-778"/>
</dbReference>
<dbReference type="PDB" id="7ZSA">
    <property type="method" value="EM"/>
    <property type="resolution" value="4.00 A"/>
    <property type="chains" value="0=1-778"/>
</dbReference>
<dbReference type="PDB" id="7ZSB">
    <property type="method" value="EM"/>
    <property type="resolution" value="6.60 A"/>
    <property type="chains" value="0=1-778"/>
</dbReference>
<dbReference type="PDB" id="8CEN">
    <property type="method" value="EM"/>
    <property type="resolution" value="3.00 A"/>
    <property type="chains" value="0=1-778"/>
</dbReference>
<dbReference type="PDB" id="8CEO">
    <property type="method" value="EM"/>
    <property type="resolution" value="3.60 A"/>
    <property type="chains" value="0=1-778"/>
</dbReference>
<dbReference type="PDB" id="8UMH">
    <property type="method" value="EM"/>
    <property type="resolution" value="4.10 A"/>
    <property type="chains" value="0=1-778"/>
</dbReference>
<dbReference type="PDB" id="8UMI">
    <property type="method" value="EM"/>
    <property type="resolution" value="3.70 A"/>
    <property type="chains" value="0=1-778"/>
</dbReference>
<dbReference type="PDB" id="8UOQ">
    <property type="method" value="EM"/>
    <property type="resolution" value="3.80 A"/>
    <property type="chains" value="0=1-778"/>
</dbReference>
<dbReference type="PDB" id="8UOT">
    <property type="method" value="EM"/>
    <property type="resolution" value="3.70 A"/>
    <property type="chains" value="0=1-778"/>
</dbReference>
<dbReference type="PDBsum" id="5FMF"/>
<dbReference type="PDBsum" id="5OQJ"/>
<dbReference type="PDBsum" id="5OQM"/>
<dbReference type="PDBsum" id="5SVA"/>
<dbReference type="PDBsum" id="6GYM"/>
<dbReference type="PDBsum" id="7K01"/>
<dbReference type="PDBsum" id="7K04"/>
<dbReference type="PDBsum" id="7M2U"/>
<dbReference type="PDBsum" id="7ML0"/>
<dbReference type="PDBsum" id="7ML1"/>
<dbReference type="PDBsum" id="7ML2"/>
<dbReference type="PDBsum" id="7ML3"/>
<dbReference type="PDBsum" id="7ML4"/>
<dbReference type="PDBsum" id="7O4I"/>
<dbReference type="PDBsum" id="7O4J"/>
<dbReference type="PDBsum" id="7O4K"/>
<dbReference type="PDBsum" id="7O4L"/>
<dbReference type="PDBsum" id="7O72"/>
<dbReference type="PDBsum" id="7O73"/>
<dbReference type="PDBsum" id="7O75"/>
<dbReference type="PDBsum" id="7ZS9"/>
<dbReference type="PDBsum" id="7ZSA"/>
<dbReference type="PDBsum" id="7ZSB"/>
<dbReference type="PDBsum" id="8CEN"/>
<dbReference type="PDBsum" id="8CEO"/>
<dbReference type="PDBsum" id="8UMH"/>
<dbReference type="PDBsum" id="8UMI"/>
<dbReference type="PDBsum" id="8UOQ"/>
<dbReference type="PDBsum" id="8UOT"/>
<dbReference type="EMDB" id="EMD-0092"/>
<dbReference type="EMDB" id="EMD-12719"/>
<dbReference type="EMDB" id="EMD-12720"/>
<dbReference type="EMDB" id="EMD-12721"/>
<dbReference type="EMDB" id="EMD-12722"/>
<dbReference type="EMDB" id="EMD-12743"/>
<dbReference type="EMDB" id="EMD-12744"/>
<dbReference type="EMDB" id="EMD-12745"/>
<dbReference type="EMDB" id="EMD-14927"/>
<dbReference type="EMDB" id="EMD-14928"/>
<dbReference type="EMDB" id="EMD-14929"/>
<dbReference type="EMDB" id="EMD-16610"/>
<dbReference type="EMDB" id="EMD-16611"/>
<dbReference type="EMDB" id="EMD-22587"/>
<dbReference type="EMDB" id="EMD-22588"/>
<dbReference type="EMDB" id="EMD-23906"/>
<dbReference type="EMDB" id="EMD-3846"/>
<dbReference type="EMDB" id="EMD-3850"/>
<dbReference type="EMDB" id="EMD-42437"/>
<dbReference type="EMDB" id="EMD-42438"/>
<dbReference type="EMDB" id="EMD-8305"/>
<dbReference type="SMR" id="P06839"/>
<dbReference type="BioGRID" id="36924">
    <property type="interactions" value="200"/>
</dbReference>
<dbReference type="ComplexPortal" id="CPX-1659">
    <property type="entry name" value="General transcription factor TFIIH complex"/>
</dbReference>
<dbReference type="DIP" id="DIP-2425N"/>
<dbReference type="FunCoup" id="P06839">
    <property type="interactions" value="927"/>
</dbReference>
<dbReference type="IntAct" id="P06839">
    <property type="interactions" value="74"/>
</dbReference>
<dbReference type="MINT" id="P06839"/>
<dbReference type="STRING" id="4932.YER171W"/>
<dbReference type="iPTMnet" id="P06839"/>
<dbReference type="PaxDb" id="4932-YER171W"/>
<dbReference type="PeptideAtlas" id="P06839"/>
<dbReference type="EnsemblFungi" id="YER171W_mRNA">
    <property type="protein sequence ID" value="YER171W"/>
    <property type="gene ID" value="YER171W"/>
</dbReference>
<dbReference type="GeneID" id="856918"/>
<dbReference type="KEGG" id="sce:YER171W"/>
<dbReference type="AGR" id="SGD:S000000973"/>
<dbReference type="SGD" id="S000000973">
    <property type="gene designation" value="RAD3"/>
</dbReference>
<dbReference type="VEuPathDB" id="FungiDB:YER171W"/>
<dbReference type="eggNOG" id="KOG1131">
    <property type="taxonomic scope" value="Eukaryota"/>
</dbReference>
<dbReference type="GeneTree" id="ENSGT00950000182970"/>
<dbReference type="HOGENOM" id="CLU_011312_1_0_1"/>
<dbReference type="InParanoid" id="P06839"/>
<dbReference type="OMA" id="WQTMGIL"/>
<dbReference type="OrthoDB" id="272481at2759"/>
<dbReference type="BioCyc" id="YEAST:G3O-30331-MONOMER"/>
<dbReference type="Reactome" id="R-SCE-113418">
    <property type="pathway name" value="Formation of the Early Elongation Complex"/>
</dbReference>
<dbReference type="Reactome" id="R-SCE-674695">
    <property type="pathway name" value="RNA Polymerase II Pre-transcription Events"/>
</dbReference>
<dbReference type="Reactome" id="R-SCE-6781823">
    <property type="pathway name" value="Formation of TC-NER Pre-Incision Complex"/>
</dbReference>
<dbReference type="Reactome" id="R-SCE-6782135">
    <property type="pathway name" value="Dual incision in TC-NER"/>
</dbReference>
<dbReference type="Reactome" id="R-SCE-6782210">
    <property type="pathway name" value="Gap-filling DNA repair synthesis and ligation in TC-NER"/>
</dbReference>
<dbReference type="Reactome" id="R-SCE-6796648">
    <property type="pathway name" value="TP53 Regulates Transcription of DNA Repair Genes"/>
</dbReference>
<dbReference type="Reactome" id="R-SCE-72086">
    <property type="pathway name" value="mRNA Capping"/>
</dbReference>
<dbReference type="Reactome" id="R-SCE-73772">
    <property type="pathway name" value="RNA Polymerase I Promoter Escape"/>
</dbReference>
<dbReference type="Reactome" id="R-SCE-73776">
    <property type="pathway name" value="RNA Polymerase II Promoter Escape"/>
</dbReference>
<dbReference type="Reactome" id="R-SCE-73779">
    <property type="pathway name" value="RNA Polymerase II Transcription Pre-Initiation And Promoter Opening"/>
</dbReference>
<dbReference type="Reactome" id="R-SCE-75953">
    <property type="pathway name" value="RNA Polymerase II Transcription Initiation"/>
</dbReference>
<dbReference type="Reactome" id="R-SCE-76042">
    <property type="pathway name" value="RNA Polymerase II Transcription Initiation And Promoter Clearance"/>
</dbReference>
<dbReference type="Reactome" id="R-SCE-77075">
    <property type="pathway name" value="RNA Pol II CTD phosphorylation and interaction with CE"/>
</dbReference>
<dbReference type="BioGRID-ORCS" id="856918">
    <property type="hits" value="1 hit in 10 CRISPR screens"/>
</dbReference>
<dbReference type="PRO" id="PR:P06839"/>
<dbReference type="Proteomes" id="UP000002311">
    <property type="component" value="Chromosome V"/>
</dbReference>
<dbReference type="RNAct" id="P06839">
    <property type="molecule type" value="protein"/>
</dbReference>
<dbReference type="GO" id="GO:0005829">
    <property type="term" value="C:cytosol"/>
    <property type="evidence" value="ECO:0000304"/>
    <property type="project" value="Reactome"/>
</dbReference>
<dbReference type="GO" id="GO:0000112">
    <property type="term" value="C:nucleotide-excision repair factor 3 complex"/>
    <property type="evidence" value="ECO:0000314"/>
    <property type="project" value="SGD"/>
</dbReference>
<dbReference type="GO" id="GO:0005634">
    <property type="term" value="C:nucleus"/>
    <property type="evidence" value="ECO:0000318"/>
    <property type="project" value="GO_Central"/>
</dbReference>
<dbReference type="GO" id="GO:0000439">
    <property type="term" value="C:transcription factor TFIIH core complex"/>
    <property type="evidence" value="ECO:0000314"/>
    <property type="project" value="SGD"/>
</dbReference>
<dbReference type="GO" id="GO:0005675">
    <property type="term" value="C:transcription factor TFIIH holo complex"/>
    <property type="evidence" value="ECO:0000314"/>
    <property type="project" value="SGD"/>
</dbReference>
<dbReference type="GO" id="GO:0051539">
    <property type="term" value="F:4 iron, 4 sulfur cluster binding"/>
    <property type="evidence" value="ECO:0000315"/>
    <property type="project" value="UniProtKB"/>
</dbReference>
<dbReference type="GO" id="GO:0043139">
    <property type="term" value="F:5'-3' DNA helicase activity"/>
    <property type="evidence" value="ECO:0000314"/>
    <property type="project" value="SGD"/>
</dbReference>
<dbReference type="GO" id="GO:0005524">
    <property type="term" value="F:ATP binding"/>
    <property type="evidence" value="ECO:0007669"/>
    <property type="project" value="UniProtKB-KW"/>
</dbReference>
<dbReference type="GO" id="GO:0016887">
    <property type="term" value="F:ATP hydrolysis activity"/>
    <property type="evidence" value="ECO:0007669"/>
    <property type="project" value="RHEA"/>
</dbReference>
<dbReference type="GO" id="GO:0008094">
    <property type="term" value="F:ATP-dependent activity, acting on DNA"/>
    <property type="evidence" value="ECO:0000314"/>
    <property type="project" value="SGD"/>
</dbReference>
<dbReference type="GO" id="GO:0003684">
    <property type="term" value="F:damaged DNA binding"/>
    <property type="evidence" value="ECO:0000314"/>
    <property type="project" value="SGD"/>
</dbReference>
<dbReference type="GO" id="GO:0003678">
    <property type="term" value="F:DNA helicase activity"/>
    <property type="evidence" value="ECO:0000318"/>
    <property type="project" value="GO_Central"/>
</dbReference>
<dbReference type="GO" id="GO:0046872">
    <property type="term" value="F:metal ion binding"/>
    <property type="evidence" value="ECO:0007669"/>
    <property type="project" value="UniProtKB-KW"/>
</dbReference>
<dbReference type="GO" id="GO:0006289">
    <property type="term" value="P:nucleotide-excision repair"/>
    <property type="evidence" value="ECO:0000314"/>
    <property type="project" value="ComplexPortal"/>
</dbReference>
<dbReference type="GO" id="GO:0045951">
    <property type="term" value="P:positive regulation of mitotic recombination"/>
    <property type="evidence" value="ECO:0000315"/>
    <property type="project" value="SGD"/>
</dbReference>
<dbReference type="GO" id="GO:0000019">
    <property type="term" value="P:regulation of mitotic recombination"/>
    <property type="evidence" value="ECO:0000315"/>
    <property type="project" value="SGD"/>
</dbReference>
<dbReference type="GO" id="GO:0006366">
    <property type="term" value="P:transcription by RNA polymerase II"/>
    <property type="evidence" value="ECO:0000314"/>
    <property type="project" value="SGD"/>
</dbReference>
<dbReference type="GO" id="GO:0006367">
    <property type="term" value="P:transcription initiation at RNA polymerase II promoter"/>
    <property type="evidence" value="ECO:0000314"/>
    <property type="project" value="ComplexPortal"/>
</dbReference>
<dbReference type="CDD" id="cd18788">
    <property type="entry name" value="SF2_C_XPD"/>
    <property type="match status" value="1"/>
</dbReference>
<dbReference type="FunFam" id="1.10.275.40:FF:000001">
    <property type="entry name" value="DNA repair helicase (Rad3)"/>
    <property type="match status" value="1"/>
</dbReference>
<dbReference type="FunFam" id="1.10.30.20:FF:000001">
    <property type="entry name" value="DNA repair helicase rad15"/>
    <property type="match status" value="1"/>
</dbReference>
<dbReference type="FunFam" id="3.40.50.300:FF:000135">
    <property type="entry name" value="DNA repair helicase RAD3, putative"/>
    <property type="match status" value="1"/>
</dbReference>
<dbReference type="FunFam" id="3.40.50.300:FF:000128">
    <property type="entry name" value="Putative DNA repair helicase RAD3"/>
    <property type="match status" value="1"/>
</dbReference>
<dbReference type="FunFam" id="3.40.50.300:FF:000381">
    <property type="entry name" value="TFIIH basal transcription factor complex helicase subunit"/>
    <property type="match status" value="1"/>
</dbReference>
<dbReference type="Gene3D" id="1.10.275.40">
    <property type="match status" value="1"/>
</dbReference>
<dbReference type="Gene3D" id="1.10.30.20">
    <property type="entry name" value="Bacterial XPD DNA helicase, FeS cluster domain"/>
    <property type="match status" value="1"/>
</dbReference>
<dbReference type="Gene3D" id="3.40.50.300">
    <property type="entry name" value="P-loop containing nucleotide triphosphate hydrolases"/>
    <property type="match status" value="2"/>
</dbReference>
<dbReference type="InterPro" id="IPR006555">
    <property type="entry name" value="ATP-dep_Helicase_C"/>
</dbReference>
<dbReference type="InterPro" id="IPR045028">
    <property type="entry name" value="DinG/Rad3-like"/>
</dbReference>
<dbReference type="InterPro" id="IPR002464">
    <property type="entry name" value="DNA/RNA_helicase_DEAH_CS"/>
</dbReference>
<dbReference type="InterPro" id="IPR010643">
    <property type="entry name" value="HBB"/>
</dbReference>
<dbReference type="InterPro" id="IPR014013">
    <property type="entry name" value="Helic_SF1/SF2_ATP-bd_DinG/Rad3"/>
</dbReference>
<dbReference type="InterPro" id="IPR006554">
    <property type="entry name" value="Helicase-like_DEXD_c2"/>
</dbReference>
<dbReference type="InterPro" id="IPR027417">
    <property type="entry name" value="P-loop_NTPase"/>
</dbReference>
<dbReference type="InterPro" id="IPR010614">
    <property type="entry name" value="RAD3-like_helicase_DEAD"/>
</dbReference>
<dbReference type="InterPro" id="IPR013020">
    <property type="entry name" value="Rad3/Chl1-like"/>
</dbReference>
<dbReference type="InterPro" id="IPR001945">
    <property type="entry name" value="RAD3/XPD"/>
</dbReference>
<dbReference type="InterPro" id="IPR042493">
    <property type="entry name" value="XPD_DNA_FeS"/>
</dbReference>
<dbReference type="NCBIfam" id="TIGR00604">
    <property type="entry name" value="rad3"/>
    <property type="match status" value="1"/>
</dbReference>
<dbReference type="PANTHER" id="PTHR11472">
    <property type="entry name" value="DNA REPAIR DEAD HELICASE RAD3/XP-D SUBFAMILY MEMBER"/>
    <property type="match status" value="1"/>
</dbReference>
<dbReference type="PANTHER" id="PTHR11472:SF1">
    <property type="entry name" value="GENERAL TRANSCRIPTION AND DNA REPAIR FACTOR IIH HELICASE SUBUNIT XPD"/>
    <property type="match status" value="1"/>
</dbReference>
<dbReference type="Pfam" id="PF06733">
    <property type="entry name" value="DEAD_2"/>
    <property type="match status" value="1"/>
</dbReference>
<dbReference type="Pfam" id="PF06777">
    <property type="entry name" value="HBB"/>
    <property type="match status" value="1"/>
</dbReference>
<dbReference type="Pfam" id="PF13307">
    <property type="entry name" value="Helicase_C_2"/>
    <property type="match status" value="1"/>
</dbReference>
<dbReference type="PRINTS" id="PR00852">
    <property type="entry name" value="XRODRMPGMNTD"/>
</dbReference>
<dbReference type="SMART" id="SM00488">
    <property type="entry name" value="DEXDc2"/>
    <property type="match status" value="1"/>
</dbReference>
<dbReference type="SMART" id="SM00491">
    <property type="entry name" value="HELICc2"/>
    <property type="match status" value="1"/>
</dbReference>
<dbReference type="SUPFAM" id="SSF52540">
    <property type="entry name" value="P-loop containing nucleoside triphosphate hydrolases"/>
    <property type="match status" value="2"/>
</dbReference>
<dbReference type="PROSITE" id="PS00690">
    <property type="entry name" value="DEAH_ATP_HELICASE"/>
    <property type="match status" value="1"/>
</dbReference>
<dbReference type="PROSITE" id="PS51193">
    <property type="entry name" value="HELICASE_ATP_BIND_2"/>
    <property type="match status" value="1"/>
</dbReference>
<protein>
    <recommendedName>
        <fullName>General transcription and DNA repair factor IIH helicase subunit XPD/RAD3</fullName>
        <shortName>TFIIH subunit XPD</shortName>
        <ecNumber evidence="9 10">5.6.2.3</ecNumber>
    </recommendedName>
    <alternativeName>
        <fullName evidence="20">DNA 5'-3' helicase RAD3</fullName>
    </alternativeName>
    <alternativeName>
        <fullName>DNA repair helicase RAD3</fullName>
    </alternativeName>
    <alternativeName>
        <fullName>RNA polymerase II transcription factor B subunit RAD3</fullName>
        <shortName>TFB subunit RAD3</shortName>
    </alternativeName>
</protein>
<comment type="function">
    <text evidence="7 9 10 12 15 16 17 18">ATP-dependent 5'-3' DNA helicase (PubMed:25775526, PubMed:2827162). Component of the general transcription and DNA repair factor IIH (TFIIH) core complex, which is involved in general and transcription-coupled nucleotide excision repair (NER) of damaged DNA and, when complexed to TFIIK, in RNA transcription by RNA polymerase II. In NER, TFIIH acts by opening DNA around the lesion to allow the excision of the damaged oligonucleotide and its replacement by a new DNA fragment. The ATP-dependent helicase activity of XPD/RAD3 is required for DNA opening. In transcription, TFIIH has an essential role in transcription initiation. When the pre-initiation complex (PIC) has been established, TFIIH is required for promoter opening and promoter escape. Phosphorylation of the C-terminal tail (CTD) of the largest subunit of RNA polymerase II by the kinase module TFIIK controls the initiation of transcription. XPD/RAD3 acts by forming a bridge between TFIIK and the core-TFIIH complex. Involved in the maintenance of the fidelity of DNA replication. Has single-stranded DNA-dependent ATPase activity (PubMed:2957691). 5'-3' DNA helicase activity requires ATP (dATP partially substitutes), will unwind over 800 bp dsDNA (PubMed:2827162). Able to unwind an RNA:DNA hybrid (PubMed:1719538).</text>
</comment>
<comment type="catalytic activity">
    <reaction evidence="9 10">
        <text>Couples ATP hydrolysis with the unwinding of duplex DNA at the replication fork by translocating in the 5'-3' direction. This creates two antiparallel DNA single strands (ssDNA). The leading ssDNA polymer is the template for DNA polymerase III holoenzyme which synthesizes a continuous strand.</text>
        <dbReference type="EC" id="5.6.2.3"/>
    </reaction>
</comment>
<comment type="catalytic activity">
    <reaction evidence="10 11 12 22">
        <text>ATP + H2O = ADP + phosphate + H(+)</text>
        <dbReference type="Rhea" id="RHEA:13065"/>
        <dbReference type="ChEBI" id="CHEBI:15377"/>
        <dbReference type="ChEBI" id="CHEBI:15378"/>
        <dbReference type="ChEBI" id="CHEBI:30616"/>
        <dbReference type="ChEBI" id="CHEBI:43474"/>
        <dbReference type="ChEBI" id="CHEBI:456216"/>
        <dbReference type="EC" id="5.6.2.3"/>
    </reaction>
</comment>
<comment type="cofactor">
    <cofactor evidence="21">
        <name>[4Fe-4S] cluster</name>
        <dbReference type="ChEBI" id="CHEBI:49883"/>
    </cofactor>
    <text evidence="21">Binds 1 [4Fe-4S] cluster.</text>
</comment>
<comment type="cofactor">
    <cofactor evidence="12">
        <name>Mg(2+)</name>
        <dbReference type="ChEBI" id="CHEBI:18420"/>
    </cofactor>
    <text evidence="12">ssDNA-dependent ATPase activity requires Mg(2+); Mn(2+) can partially replace Mg(2+) (PubMed:2957691).</text>
</comment>
<comment type="biophysicochemical properties">
    <phDependence>
        <text evidence="10">Optimum pH is 5.6 for both helicase and ATPase activites, suggesting they are coupled (PubMed:2827162).</text>
    </phDependence>
</comment>
<comment type="subunit">
    <text evidence="4 8 15 16">Component of the 7-subunit TFIIH core complex composed of XPB/SSL2, XPD/RAD3, SSL1, TFB1, TFB2, TFB4 and TFB5, which is active in NER. The core complex associates with the 3-subunit CTD-kinase module TFIIK composed of CCL1, KIN28 and TFB3 to form the 10-subunit holoenzyme (holo-TFIIH) active in transcription (PubMed:7961739, PubMed:7813015, PubMed:14500720). An additionnal subunit, TFB6, plays a role in the dissociation of the SSL2 helicase from TFIIH after transcription initiation (PubMed:22411836).</text>
</comment>
<comment type="subcellular location">
    <subcellularLocation>
        <location evidence="20">Nucleus</location>
    </subcellularLocation>
</comment>
<comment type="disruption phenotype">
    <text evidence="13">Essential, it cannot be deleted (PubMed:2987851).</text>
</comment>
<comment type="miscellaneous">
    <text evidence="5">Present with 14400 molecules/cell in log phase SD medium.</text>
</comment>
<comment type="similarity">
    <text evidence="20">Belongs to the helicase family. RAD3/XPD subfamily.</text>
</comment>
<sequence length="778" mass="89786">MKFYIDDLPVLFPYPKIYPEQYNYMCDIKKTLDVGGNSILEMPSGTGKTVSLLSLTIAYQMHYPEHRKIIYCSRTMSEIEKALVELENLMDYRTKELGYQEDFRGLGLTSRKNLCLHPEVSKERKGTVVDEKCRRMTNGQAKRKLEEDPEANVELCEYHENLYNIEVEDYLPKGVFSFEKLLKYCEEKTLCPYFIVRRMISLCNIIIYSYHYLLDPKIAERVSNEVSKDSIVIFDEAHNIDNVCIESLSLDLTTDALRRATRGANALDERISEVRKVDSQKLQDEYEKLVQGLHSADILTDQEEPFVETPVLPQDLLTEAIPGNIRRAEHFVSFLKRLIEYLKTRMKVLHVISETPKSFLQHLKQLTFIERKPLRFCSERLSLLVRTLEVTEVEDFTALKDIATFATLISTYEEGFLLIIEPYEIENAAVPNPIMRFTCLDASIAIKPVFERFSSVIITSGTISPLDMYPRMLNFKTVLQKSYAMTLAKKSFLPMIITKGSDQVAISSRFEIRNDPSIVRNYGSMLVEFAKITPDGMVVFFPSYLYMESIVSMWQTMGILDEVWKHKLILVETPDAQETSLALETYRKACSNGRGAILLSVARGKVSEGIDFDHQYGRTVLMIGIPFQYTESRILKARLEFMRENYRIRENDFLSFDAMRHAAQCLGRVLRGKDDYGVMVLADRRFSRKRSQLPKWIAQGLSDADLNLSTDMAISNTKQFLRTMAQPTDPKDQEGVSVWSYEDLIKHQNSRKDQGGFIENENKEGEQDEDEDEDIEMQ</sequence>
<reference key="1">
    <citation type="journal article" date="1985" name="Nucleic Acids Res.">
        <title>The nucleotide sequence of the RAD3 gene of Saccharomyces cerevisiae: a potential adenine nucleotide binding amino acid sequence and a nonessential acidic carboxyl terminal region.</title>
        <authorList>
            <person name="Reynolds P."/>
            <person name="Higgins D.R."/>
            <person name="Prakash L."/>
            <person name="Prakash S."/>
        </authorList>
    </citation>
    <scope>NUCLEOTIDE SEQUENCE [GENOMIC DNA]</scope>
    <scope>DISRUPTION PHENOTYPE</scope>
</reference>
<reference key="2">
    <citation type="journal article" date="1985" name="Mol. Cell. Biol.">
        <title>RAD3 gene of Saccharomyces cerevisiae: nucleotide sequence of wild-type and mutant alleles, transcript mapping, and aspects of gene regulation.</title>
        <authorList>
            <person name="Naumovski L."/>
            <person name="Chu G."/>
            <person name="Berg P."/>
            <person name="Friedberg E.C."/>
        </authorList>
    </citation>
    <scope>NUCLEOTIDE SEQUENCE [GENOMIC DNA]</scope>
    <scope>MUTAGENESIS OF GLU-236 AND GLY-461</scope>
</reference>
<reference key="3">
    <citation type="journal article" date="1997" name="Nature">
        <title>The nucleotide sequence of Saccharomyces cerevisiae chromosome V.</title>
        <authorList>
            <person name="Dietrich F.S."/>
            <person name="Mulligan J.T."/>
            <person name="Hennessy K.M."/>
            <person name="Yelton M.A."/>
            <person name="Allen E."/>
            <person name="Araujo R."/>
            <person name="Aviles E."/>
            <person name="Berno A."/>
            <person name="Brennan T."/>
            <person name="Carpenter J."/>
            <person name="Chen E."/>
            <person name="Cherry J.M."/>
            <person name="Chung E."/>
            <person name="Duncan M."/>
            <person name="Guzman E."/>
            <person name="Hartzell G."/>
            <person name="Hunicke-Smith S."/>
            <person name="Hyman R.W."/>
            <person name="Kayser A."/>
            <person name="Komp C."/>
            <person name="Lashkari D."/>
            <person name="Lew H."/>
            <person name="Lin D."/>
            <person name="Mosedale D."/>
            <person name="Nakahara K."/>
            <person name="Namath A."/>
            <person name="Norgren R."/>
            <person name="Oefner P."/>
            <person name="Oh C."/>
            <person name="Petel F.X."/>
            <person name="Roberts D."/>
            <person name="Sehl P."/>
            <person name="Schramm S."/>
            <person name="Shogren T."/>
            <person name="Smith V."/>
            <person name="Taylor P."/>
            <person name="Wei Y."/>
            <person name="Botstein D."/>
            <person name="Davis R.W."/>
        </authorList>
    </citation>
    <scope>NUCLEOTIDE SEQUENCE [LARGE SCALE GENOMIC DNA]</scope>
    <source>
        <strain>ATCC 204508 / S288c</strain>
    </source>
</reference>
<reference key="4">
    <citation type="journal article" date="2014" name="G3 (Bethesda)">
        <title>The reference genome sequence of Saccharomyces cerevisiae: Then and now.</title>
        <authorList>
            <person name="Engel S.R."/>
            <person name="Dietrich F.S."/>
            <person name="Fisk D.G."/>
            <person name="Binkley G."/>
            <person name="Balakrishnan R."/>
            <person name="Costanzo M.C."/>
            <person name="Dwight S.S."/>
            <person name="Hitz B.C."/>
            <person name="Karra K."/>
            <person name="Nash R.S."/>
            <person name="Weng S."/>
            <person name="Wong E.D."/>
            <person name="Lloyd P."/>
            <person name="Skrzypek M.S."/>
            <person name="Miyasato S.R."/>
            <person name="Simison M."/>
            <person name="Cherry J.M."/>
        </authorList>
    </citation>
    <scope>GENOME REANNOTATION</scope>
    <source>
        <strain>ATCC 204508 / S288c</strain>
    </source>
</reference>
<reference key="5">
    <citation type="journal article" date="1993" name="Cell">
        <title>Dual roles of a multiprotein complex from S. cerevisiae in transcription and DNA repair.</title>
        <authorList>
            <person name="Feaver W.J."/>
            <person name="Svejstrup J.Q."/>
            <person name="Bardwell L."/>
            <person name="Bardwell A.J."/>
            <person name="Buratowski S."/>
            <person name="Gulyas K.D."/>
            <person name="Donahue T.F."/>
            <person name="Friedberg E.C."/>
            <person name="Kornberg R.D."/>
        </authorList>
    </citation>
    <scope>PROTEIN SEQUENCE OF 1-10</scope>
    <scope>FUNCTION</scope>
</reference>
<reference key="6">
    <citation type="journal article" date="1987" name="Proc. Natl. Acad. Sci. U.S.A.">
        <title>The RAD3 gene of Saccharomyces cerevisiae encodes a DNA-dependent ATPase.</title>
        <authorList>
            <person name="Sung P."/>
            <person name="Prakash L."/>
            <person name="Weber S."/>
            <person name="Prakash S."/>
        </authorList>
    </citation>
    <scope>FUNCTION AS AN ATPASE</scope>
    <scope>CATALYTIC ACTIVITY</scope>
    <scope>COFACTOR</scope>
</reference>
<reference key="7">
    <citation type="journal article" date="1987" name="Proc. Natl. Acad. Sci. U.S.A.">
        <title>RAD3 protein of Saccharomyces cerevisiae is a DNA helicase.</title>
        <authorList>
            <person name="Sung P."/>
            <person name="Prakash L."/>
            <person name="Matson S.W."/>
            <person name="Prakash S."/>
        </authorList>
    </citation>
    <scope>FUNCTION AS A 5'-3' DNA HELICASE</scope>
    <scope>FUNCTION AS AN ATPASE</scope>
    <scope>CATALYTIC ACTIVITY</scope>
    <scope>BIOPHYSICOCHEMICAL PROPERTIES</scope>
</reference>
<reference key="8">
    <citation type="journal article" date="1988" name="EMBO J.">
        <title>Mutation of lysine-48 to arginine in the yeast RAD3 protein abolishes its ATPase and DNA helicase activities but not the ability to bind ATP.</title>
        <authorList>
            <person name="Sung P."/>
            <person name="Higgins D."/>
            <person name="Prakash L."/>
            <person name="Prakash S."/>
        </authorList>
    </citation>
    <scope>FUNCTION</scope>
    <scope>ATP BINDING</scope>
    <scope>DNA-BINDING</scope>
    <scope>MUTAGENESIS OF LYS-48</scope>
</reference>
<reference key="9">
    <citation type="journal article" date="1991" name="Proc. Natl. Acad. Sci. U.S.A.">
        <title>DNA.RNA helicase activity of RAD3 protein of Saccharomyces cerevisiae.</title>
        <authorList>
            <person name="Bailly V."/>
            <person name="Sung P."/>
            <person name="Prakash L."/>
            <person name="Prakash S."/>
        </authorList>
    </citation>
    <scope>RNA:DNA HELICASE ACTIVITY</scope>
    <scope>MUTAGENESIS OF LYS-48</scope>
</reference>
<reference key="10">
    <citation type="journal article" date="1990" name="J. Bacteriol.">
        <title>Effects of multiple yeast rad3 mutant alleles on UV sensitivity, mutability, and mitotic recombination.</title>
        <authorList>
            <person name="Song J.M."/>
            <person name="Montelone B.A."/>
            <person name="Siede W."/>
            <person name="Friedberg E.C."/>
        </authorList>
    </citation>
    <scope>MUTANTS</scope>
</reference>
<reference key="11">
    <citation type="journal article" date="1991" name="Nucleic Acids Res.">
        <title>The RAD3 gene is a member of the DEAH family RNA helicase-like protein.</title>
        <authorList>
            <person name="Harosh I."/>
            <person name="Deschavanne P.J."/>
        </authorList>
    </citation>
    <scope>PRESENCE OF A DEAH MOTIF</scope>
</reference>
<reference key="12">
    <citation type="journal article" date="1994" name="J. Biol. Chem.">
        <title>RNA polymerase transcription factor IIH holoenzyme from yeast.</title>
        <authorList>
            <person name="Svejstrup J.Q."/>
            <person name="Feaver W.J."/>
            <person name="LaPointe J."/>
            <person name="Kornberg R.D."/>
        </authorList>
    </citation>
    <scope>FUNCTION OF TFIIH IN RNA POLYMERASE II TRANSCRIPTION</scope>
    <scope>IDENTIFICATION IN THE TFIIH COMPLEX</scope>
</reference>
<reference key="13">
    <citation type="journal article" date="1995" name="Cell">
        <title>Different forms of TFIIH for transcription and DNA repair: holo-TFIIH and a nucleotide excision repairosome.</title>
        <authorList>
            <person name="Svejstrup J.Q."/>
            <person name="Wang Z."/>
            <person name="Feaver W.J."/>
            <person name="Wu X."/>
            <person name="Bushnell D.A."/>
            <person name="Donahue T.F."/>
            <person name="Friedberg E.C."/>
            <person name="Kornberg R.D."/>
        </authorList>
    </citation>
    <scope>FUNCTION</scope>
    <scope>SUBUNIT</scope>
</reference>
<reference key="14">
    <citation type="journal article" date="1996" name="J. Biol. Chem.">
        <title>Reconstitution of TFIIH and requirement of its DNA helicase subunits, Rad3 and Rad25, in the incision step of nucleotide excision repair.</title>
        <authorList>
            <person name="Sung P."/>
            <person name="Guzder S.N."/>
            <person name="Prakash L."/>
            <person name="Prakash S."/>
        </authorList>
    </citation>
    <scope>FUNCTION OF THE TFIIH CORE COMPLEX IN DNA REPAIR</scope>
</reference>
<reference key="15">
    <citation type="journal article" date="2003" name="J. Biol. Chem.">
        <title>Revised subunit structure of yeast transcription factor IIH (TFIIH) and reconciliation with human TFIIH.</title>
        <authorList>
            <person name="Takagi Y."/>
            <person name="Komori H."/>
            <person name="Chang W.-H."/>
            <person name="Hudmon A."/>
            <person name="Erdjument-Bromage H."/>
            <person name="Tempst P."/>
            <person name="Kornberg R.D."/>
        </authorList>
    </citation>
    <scope>IDENTIFICATION IN THE TFIIH CORE COMPLEX</scope>
</reference>
<reference key="16">
    <citation type="journal article" date="1993" name="Mol. Microbiol.">
        <title>The Rad3 protein from Saccharomyces cerevisiae: a DNA and DNA:RNA helicase with putative RNA helicase activity.</title>
        <authorList>
            <person name="Deschavanne P.J."/>
            <person name="Harosh I."/>
        </authorList>
    </citation>
    <scope>REVIEW</scope>
</reference>
<reference key="17">
    <citation type="journal article" date="2003" name="Nature">
        <title>Global analysis of protein expression in yeast.</title>
        <authorList>
            <person name="Ghaemmaghami S."/>
            <person name="Huh W.-K."/>
            <person name="Bower K."/>
            <person name="Howson R.W."/>
            <person name="Belle A."/>
            <person name="Dephoure N."/>
            <person name="O'Shea E.K."/>
            <person name="Weissman J.S."/>
        </authorList>
    </citation>
    <scope>LEVEL OF PROTEIN EXPRESSION [LARGE SCALE ANALYSIS]</scope>
</reference>
<reference key="18">
    <citation type="journal article" date="2006" name="Mol. Cell">
        <title>The DNA repair helicases XPD and FancJ have essential iron-sulfur domains.</title>
        <authorList>
            <person name="Rudolf J."/>
            <person name="Makrantoni V."/>
            <person name="Ingledew W.J."/>
            <person name="Stark M.J."/>
            <person name="White M.F."/>
        </authorList>
    </citation>
    <scope>COFACTOR</scope>
    <scope>IRON-SULFUR-BINDING</scope>
    <scope>MUTAGENESIS OF LYS-48; ARG-111 AND CYS-115</scope>
</reference>
<reference key="19">
    <citation type="journal article" date="2012" name="Proc. Natl. Acad. Sci. U.S.A.">
        <title>Tfb6, a previously unidentified subunit of the general transcription factor TFIIH, facilitates dissociation of Ssl2 helicase after transcription initiation.</title>
        <authorList>
            <person name="Murakami K."/>
            <person name="Gibbons B.J."/>
            <person name="Davis R.E."/>
            <person name="Nagai S."/>
            <person name="Liu X."/>
            <person name="Robinson P.J."/>
            <person name="Wu T."/>
            <person name="Kaplan C.D."/>
            <person name="Kornberg R.D."/>
        </authorList>
    </citation>
    <scope>IDENTIFICATION BY MASS SPECTROMETRY</scope>
    <scope>SUBUNIT</scope>
</reference>
<reference key="20">
    <citation type="journal article" date="2015" name="Proc. Natl. Acad. Sci. U.S.A.">
        <title>Double-stranded DNA translocase activity of transcription factor TFIIH and the mechanism of RNA polymerase II open complex formation.</title>
        <authorList>
            <person name="Fishburn J."/>
            <person name="Tomko E."/>
            <person name="Galburt E."/>
            <person name="Hahn S."/>
        </authorList>
    </citation>
    <scope>FUNCTION AS A 5'-3' DNA HELICASE</scope>
    <scope>MUTAGENESIS OF GLU-236</scope>
</reference>
<reference evidence="23" key="21">
    <citation type="journal article" date="2015" name="Proc. Natl. Acad. Sci. U.S.A.">
        <title>Structure of an RNA polymerase II preinitiation complex.</title>
        <authorList>
            <person name="Murakami K."/>
            <person name="Tsai K.L."/>
            <person name="Kalisman N."/>
            <person name="Bushnell D.A."/>
            <person name="Asturias F.J."/>
            <person name="Kornberg R.D."/>
        </authorList>
    </citation>
    <scope>STRUCTURE BY ELECTRON MICROSCOPY (6.00 ANGSTROMS)</scope>
</reference>
<reference evidence="24" key="22">
    <citation type="journal article" date="2016" name="Cell">
        <title>Structure of a complete mediator-RNA polymerase II pre-initiation complex.</title>
        <authorList>
            <person name="Robinson P.J."/>
            <person name="Trnka M.J."/>
            <person name="Bushnell D.A."/>
            <person name="Davis R.E."/>
            <person name="Mattei P.J."/>
            <person name="Burlingame A.L."/>
            <person name="Kornberg R.D."/>
        </authorList>
    </citation>
    <scope>STRUCTURE BY ELECTRON MICROSCOPY (15.30 ANGSTROMS)</scope>
</reference>
<organism>
    <name type="scientific">Saccharomyces cerevisiae (strain ATCC 204508 / S288c)</name>
    <name type="common">Baker's yeast</name>
    <dbReference type="NCBI Taxonomy" id="559292"/>
    <lineage>
        <taxon>Eukaryota</taxon>
        <taxon>Fungi</taxon>
        <taxon>Dikarya</taxon>
        <taxon>Ascomycota</taxon>
        <taxon>Saccharomycotina</taxon>
        <taxon>Saccharomycetes</taxon>
        <taxon>Saccharomycetales</taxon>
        <taxon>Saccharomycetaceae</taxon>
        <taxon>Saccharomyces</taxon>
    </lineage>
</organism>
<accession>P06839</accession>
<accession>D3DM79</accession>
<gene>
    <name evidence="19" type="primary">RAD3</name>
    <name type="synonym">REM1</name>
    <name type="ordered locus">YER171W</name>
</gene>
<keyword id="KW-0002">3D-structure</keyword>
<keyword id="KW-0004">4Fe-4S</keyword>
<keyword id="KW-0067">ATP-binding</keyword>
<keyword id="KW-0903">Direct protein sequencing</keyword>
<keyword id="KW-0227">DNA damage</keyword>
<keyword id="KW-0234">DNA repair</keyword>
<keyword id="KW-0238">DNA-binding</keyword>
<keyword id="KW-0347">Helicase</keyword>
<keyword id="KW-0378">Hydrolase</keyword>
<keyword id="KW-0408">Iron</keyword>
<keyword id="KW-0411">Iron-sulfur</keyword>
<keyword id="KW-0413">Isomerase</keyword>
<keyword id="KW-0479">Metal-binding</keyword>
<keyword id="KW-0547">Nucleotide-binding</keyword>
<keyword id="KW-0539">Nucleus</keyword>
<keyword id="KW-1185">Reference proteome</keyword>
<keyword id="KW-0804">Transcription</keyword>
<keyword id="KW-0805">Transcription regulation</keyword>
<proteinExistence type="evidence at protein level"/>
<name>RAD3_YEAST</name>
<evidence type="ECO:0000250" key="1">
    <source>
        <dbReference type="UniProtKB" id="P18074"/>
    </source>
</evidence>
<evidence type="ECO:0000255" key="2">
    <source>
        <dbReference type="PROSITE-ProRule" id="PRU00541"/>
    </source>
</evidence>
<evidence type="ECO:0000256" key="3">
    <source>
        <dbReference type="SAM" id="MobiDB-lite"/>
    </source>
</evidence>
<evidence type="ECO:0000269" key="4">
    <source>
    </source>
</evidence>
<evidence type="ECO:0000269" key="5">
    <source>
    </source>
</evidence>
<evidence type="ECO:0000269" key="6">
    <source>
    </source>
</evidence>
<evidence type="ECO:0000269" key="7">
    <source>
    </source>
</evidence>
<evidence type="ECO:0000269" key="8">
    <source>
    </source>
</evidence>
<evidence type="ECO:0000269" key="9">
    <source>
    </source>
</evidence>
<evidence type="ECO:0000269" key="10">
    <source>
    </source>
</evidence>
<evidence type="ECO:0000269" key="11">
    <source>
    </source>
</evidence>
<evidence type="ECO:0000269" key="12">
    <source>
    </source>
</evidence>
<evidence type="ECO:0000269" key="13">
    <source>
    </source>
</evidence>
<evidence type="ECO:0000269" key="14">
    <source>
    </source>
</evidence>
<evidence type="ECO:0000269" key="15">
    <source>
    </source>
</evidence>
<evidence type="ECO:0000269" key="16">
    <source>
    </source>
</evidence>
<evidence type="ECO:0000269" key="17">
    <source>
    </source>
</evidence>
<evidence type="ECO:0000269" key="18">
    <source>
    </source>
</evidence>
<evidence type="ECO:0000303" key="19">
    <source>
    </source>
</evidence>
<evidence type="ECO:0000305" key="20"/>
<evidence type="ECO:0000305" key="21">
    <source>
    </source>
</evidence>
<evidence type="ECO:0000305" key="22">
    <source>
    </source>
</evidence>
<evidence type="ECO:0007744" key="23">
    <source>
        <dbReference type="PDB" id="5FMF"/>
    </source>
</evidence>
<evidence type="ECO:0007744" key="24">
    <source>
        <dbReference type="PDB" id="5SVA"/>
    </source>
</evidence>
<evidence type="ECO:0007829" key="25">
    <source>
        <dbReference type="PDB" id="7ML0"/>
    </source>
</evidence>
<evidence type="ECO:0007829" key="26">
    <source>
        <dbReference type="PDB" id="7ML4"/>
    </source>
</evidence>
<evidence type="ECO:0007829" key="27">
    <source>
        <dbReference type="PDB" id="7O4J"/>
    </source>
</evidence>
<evidence type="ECO:0007829" key="28">
    <source>
        <dbReference type="PDB" id="7O73"/>
    </source>
</evidence>
<evidence type="ECO:0007829" key="29">
    <source>
        <dbReference type="PDB" id="7ZS9"/>
    </source>
</evidence>